<evidence type="ECO:0000255" key="1">
    <source>
        <dbReference type="HAMAP-Rule" id="MF_00117"/>
    </source>
</evidence>
<comment type="function">
    <text evidence="1">Redox regulated molecular chaperone. Protects both thermally unfolding and oxidatively damaged proteins from irreversible aggregation. Plays an important role in the bacterial defense system toward oxidative stress.</text>
</comment>
<comment type="subcellular location">
    <subcellularLocation>
        <location evidence="1">Cytoplasm</location>
    </subcellularLocation>
</comment>
<comment type="PTM">
    <text evidence="1">Under oxidizing conditions two disulfide bonds are formed involving the reactive cysteines. Under reducing conditions zinc is bound to the reactive cysteines and the protein is inactive.</text>
</comment>
<comment type="similarity">
    <text evidence="1">Belongs to the HSP33 family.</text>
</comment>
<sequence>MTHDYIVKALAFDGEIRAYAALTTETVQEAQTRHYTWPTASAAMGRTMTATAMMGAMLKGDQKLTVTVDGQGPIGRIIADANAKGEVRAYVDHPQTHFPLNEQGKLDVRRAVGTNGSIIVVKDVGMKDYFSGASPIVSGELGEDFTYYYATSEQTPSSVGLGVLVNPDNTIKAAGGFIIQVMPGAKDETISKLEKAISEMTPVSKLIEQGLTPEGLLNEILGEDHVQILEKMPVQFECNCSHEKFLNAIKGLGEAEIQNMIKEDHGAEAVCHFCGNKYKYTEEELNVLLESLA</sequence>
<proteinExistence type="inferred from homology"/>
<protein>
    <recommendedName>
        <fullName evidence="1">33 kDa chaperonin</fullName>
    </recommendedName>
    <alternativeName>
        <fullName evidence="1">Heat shock protein 33 homolog</fullName>
        <shortName evidence="1">HSP33</shortName>
    </alternativeName>
</protein>
<gene>
    <name evidence="1" type="primary">hslO</name>
    <name type="ordered locus">SAHV_0509</name>
</gene>
<feature type="chain" id="PRO_1000015575" description="33 kDa chaperonin">
    <location>
        <begin position="1"/>
        <end position="293"/>
    </location>
</feature>
<feature type="disulfide bond" description="Redox-active" evidence="1">
    <location>
        <begin position="238"/>
        <end position="240"/>
    </location>
</feature>
<feature type="disulfide bond" description="Redox-active" evidence="1">
    <location>
        <begin position="271"/>
        <end position="274"/>
    </location>
</feature>
<keyword id="KW-0143">Chaperone</keyword>
<keyword id="KW-0963">Cytoplasm</keyword>
<keyword id="KW-1015">Disulfide bond</keyword>
<keyword id="KW-0676">Redox-active center</keyword>
<keyword id="KW-0862">Zinc</keyword>
<accession>A7WYS1</accession>
<reference key="1">
    <citation type="journal article" date="2008" name="Antimicrob. Agents Chemother.">
        <title>Mutated response regulator graR is responsible for phenotypic conversion of Staphylococcus aureus from heterogeneous vancomycin-intermediate resistance to vancomycin-intermediate resistance.</title>
        <authorList>
            <person name="Neoh H.-M."/>
            <person name="Cui L."/>
            <person name="Yuzawa H."/>
            <person name="Takeuchi F."/>
            <person name="Matsuo M."/>
            <person name="Hiramatsu K."/>
        </authorList>
    </citation>
    <scope>NUCLEOTIDE SEQUENCE [LARGE SCALE GENOMIC DNA]</scope>
    <source>
        <strain>Mu3 / ATCC 700698</strain>
    </source>
</reference>
<dbReference type="EMBL" id="AP009324">
    <property type="protein sequence ID" value="BAF77392.1"/>
    <property type="molecule type" value="Genomic_DNA"/>
</dbReference>
<dbReference type="RefSeq" id="WP_000148598.1">
    <property type="nucleotide sequence ID" value="NC_009782.1"/>
</dbReference>
<dbReference type="SMR" id="A7WYS1"/>
<dbReference type="KEGG" id="saw:SAHV_0509"/>
<dbReference type="HOGENOM" id="CLU_054493_1_0_9"/>
<dbReference type="GO" id="GO:0005737">
    <property type="term" value="C:cytoplasm"/>
    <property type="evidence" value="ECO:0007669"/>
    <property type="project" value="UniProtKB-SubCell"/>
</dbReference>
<dbReference type="GO" id="GO:0044183">
    <property type="term" value="F:protein folding chaperone"/>
    <property type="evidence" value="ECO:0007669"/>
    <property type="project" value="TreeGrafter"/>
</dbReference>
<dbReference type="GO" id="GO:0051082">
    <property type="term" value="F:unfolded protein binding"/>
    <property type="evidence" value="ECO:0007669"/>
    <property type="project" value="UniProtKB-UniRule"/>
</dbReference>
<dbReference type="GO" id="GO:0042026">
    <property type="term" value="P:protein refolding"/>
    <property type="evidence" value="ECO:0007669"/>
    <property type="project" value="TreeGrafter"/>
</dbReference>
<dbReference type="CDD" id="cd00498">
    <property type="entry name" value="Hsp33"/>
    <property type="match status" value="1"/>
</dbReference>
<dbReference type="Gene3D" id="3.55.30.10">
    <property type="entry name" value="Hsp33 domain"/>
    <property type="match status" value="1"/>
</dbReference>
<dbReference type="Gene3D" id="3.90.1280.10">
    <property type="entry name" value="HSP33 redox switch-like"/>
    <property type="match status" value="1"/>
</dbReference>
<dbReference type="HAMAP" id="MF_00117">
    <property type="entry name" value="HslO"/>
    <property type="match status" value="1"/>
</dbReference>
<dbReference type="InterPro" id="IPR000397">
    <property type="entry name" value="Heat_shock_Hsp33"/>
</dbReference>
<dbReference type="InterPro" id="IPR016154">
    <property type="entry name" value="Heat_shock_Hsp33_C"/>
</dbReference>
<dbReference type="InterPro" id="IPR016153">
    <property type="entry name" value="Heat_shock_Hsp33_N"/>
</dbReference>
<dbReference type="NCBIfam" id="NF001033">
    <property type="entry name" value="PRK00114.1"/>
    <property type="match status" value="1"/>
</dbReference>
<dbReference type="PANTHER" id="PTHR30111">
    <property type="entry name" value="33 KDA CHAPERONIN"/>
    <property type="match status" value="1"/>
</dbReference>
<dbReference type="PANTHER" id="PTHR30111:SF1">
    <property type="entry name" value="33 KDA CHAPERONIN"/>
    <property type="match status" value="1"/>
</dbReference>
<dbReference type="Pfam" id="PF01430">
    <property type="entry name" value="HSP33"/>
    <property type="match status" value="1"/>
</dbReference>
<dbReference type="PIRSF" id="PIRSF005261">
    <property type="entry name" value="Heat_shock_Hsp33"/>
    <property type="match status" value="1"/>
</dbReference>
<dbReference type="SUPFAM" id="SSF64397">
    <property type="entry name" value="Hsp33 domain"/>
    <property type="match status" value="1"/>
</dbReference>
<dbReference type="SUPFAM" id="SSF118352">
    <property type="entry name" value="HSP33 redox switch-like"/>
    <property type="match status" value="1"/>
</dbReference>
<organism>
    <name type="scientific">Staphylococcus aureus (strain Mu3 / ATCC 700698)</name>
    <dbReference type="NCBI Taxonomy" id="418127"/>
    <lineage>
        <taxon>Bacteria</taxon>
        <taxon>Bacillati</taxon>
        <taxon>Bacillota</taxon>
        <taxon>Bacilli</taxon>
        <taxon>Bacillales</taxon>
        <taxon>Staphylococcaceae</taxon>
        <taxon>Staphylococcus</taxon>
    </lineage>
</organism>
<name>HSLO_STAA1</name>